<dbReference type="EC" id="2.5.1.78" evidence="1"/>
<dbReference type="EMBL" id="AM711867">
    <property type="protein sequence ID" value="CAN00999.1"/>
    <property type="molecule type" value="Genomic_DNA"/>
</dbReference>
<dbReference type="RefSeq" id="WP_012037646.1">
    <property type="nucleotide sequence ID" value="NC_009480.1"/>
</dbReference>
<dbReference type="SMR" id="A5CPK0"/>
<dbReference type="KEGG" id="cmi:CMM_0960"/>
<dbReference type="eggNOG" id="COG0054">
    <property type="taxonomic scope" value="Bacteria"/>
</dbReference>
<dbReference type="HOGENOM" id="CLU_089358_1_2_11"/>
<dbReference type="OrthoDB" id="9809709at2"/>
<dbReference type="UniPathway" id="UPA00275">
    <property type="reaction ID" value="UER00404"/>
</dbReference>
<dbReference type="Proteomes" id="UP000001564">
    <property type="component" value="Chromosome"/>
</dbReference>
<dbReference type="GO" id="GO:0005829">
    <property type="term" value="C:cytosol"/>
    <property type="evidence" value="ECO:0007669"/>
    <property type="project" value="TreeGrafter"/>
</dbReference>
<dbReference type="GO" id="GO:0009349">
    <property type="term" value="C:riboflavin synthase complex"/>
    <property type="evidence" value="ECO:0007669"/>
    <property type="project" value="InterPro"/>
</dbReference>
<dbReference type="GO" id="GO:0000906">
    <property type="term" value="F:6,7-dimethyl-8-ribityllumazine synthase activity"/>
    <property type="evidence" value="ECO:0007669"/>
    <property type="project" value="UniProtKB-UniRule"/>
</dbReference>
<dbReference type="GO" id="GO:0009231">
    <property type="term" value="P:riboflavin biosynthetic process"/>
    <property type="evidence" value="ECO:0007669"/>
    <property type="project" value="UniProtKB-UniRule"/>
</dbReference>
<dbReference type="CDD" id="cd09209">
    <property type="entry name" value="Lumazine_synthase-I"/>
    <property type="match status" value="1"/>
</dbReference>
<dbReference type="Gene3D" id="3.40.50.960">
    <property type="entry name" value="Lumazine/riboflavin synthase"/>
    <property type="match status" value="1"/>
</dbReference>
<dbReference type="HAMAP" id="MF_00178">
    <property type="entry name" value="Lumazine_synth"/>
    <property type="match status" value="1"/>
</dbReference>
<dbReference type="InterPro" id="IPR034964">
    <property type="entry name" value="LS"/>
</dbReference>
<dbReference type="InterPro" id="IPR002180">
    <property type="entry name" value="LS/RS"/>
</dbReference>
<dbReference type="InterPro" id="IPR036467">
    <property type="entry name" value="LS/RS_sf"/>
</dbReference>
<dbReference type="NCBIfam" id="TIGR00114">
    <property type="entry name" value="lumazine-synth"/>
    <property type="match status" value="1"/>
</dbReference>
<dbReference type="PANTHER" id="PTHR21058:SF0">
    <property type="entry name" value="6,7-DIMETHYL-8-RIBITYLLUMAZINE SYNTHASE"/>
    <property type="match status" value="1"/>
</dbReference>
<dbReference type="PANTHER" id="PTHR21058">
    <property type="entry name" value="6,7-DIMETHYL-8-RIBITYLLUMAZINE SYNTHASE DMRL SYNTHASE LUMAZINE SYNTHASE"/>
    <property type="match status" value="1"/>
</dbReference>
<dbReference type="Pfam" id="PF00885">
    <property type="entry name" value="DMRL_synthase"/>
    <property type="match status" value="1"/>
</dbReference>
<dbReference type="SUPFAM" id="SSF52121">
    <property type="entry name" value="Lumazine synthase"/>
    <property type="match status" value="1"/>
</dbReference>
<organism>
    <name type="scientific">Clavibacter michiganensis subsp. michiganensis (strain NCPPB 382)</name>
    <dbReference type="NCBI Taxonomy" id="443906"/>
    <lineage>
        <taxon>Bacteria</taxon>
        <taxon>Bacillati</taxon>
        <taxon>Actinomycetota</taxon>
        <taxon>Actinomycetes</taxon>
        <taxon>Micrococcales</taxon>
        <taxon>Microbacteriaceae</taxon>
        <taxon>Clavibacter</taxon>
    </lineage>
</organism>
<sequence>MSGHGAPDIDPTALDGSGLRVTVVAGRWHDEISAGLLAGARRVLDAAGVTTTVIRVPGSFELPVVARAALDAGADAVVALGVIIRGGTPHFEYVSDAATSGLTQASLLAGKPIGFGLLTLDDEQQGIDRAGLPGSKEDKGAEAAEAAVTTALLLKSIRGA</sequence>
<comment type="function">
    <text evidence="1">Catalyzes the formation of 6,7-dimethyl-8-ribityllumazine by condensation of 5-amino-6-(D-ribitylamino)uracil with 3,4-dihydroxy-2-butanone 4-phosphate. This is the penultimate step in the biosynthesis of riboflavin.</text>
</comment>
<comment type="catalytic activity">
    <reaction evidence="1">
        <text>(2S)-2-hydroxy-3-oxobutyl phosphate + 5-amino-6-(D-ribitylamino)uracil = 6,7-dimethyl-8-(1-D-ribityl)lumazine + phosphate + 2 H2O + H(+)</text>
        <dbReference type="Rhea" id="RHEA:26152"/>
        <dbReference type="ChEBI" id="CHEBI:15377"/>
        <dbReference type="ChEBI" id="CHEBI:15378"/>
        <dbReference type="ChEBI" id="CHEBI:15934"/>
        <dbReference type="ChEBI" id="CHEBI:43474"/>
        <dbReference type="ChEBI" id="CHEBI:58201"/>
        <dbReference type="ChEBI" id="CHEBI:58830"/>
        <dbReference type="EC" id="2.5.1.78"/>
    </reaction>
</comment>
<comment type="pathway">
    <text evidence="1">Cofactor biosynthesis; riboflavin biosynthesis; riboflavin from 2-hydroxy-3-oxobutyl phosphate and 5-amino-6-(D-ribitylamino)uracil: step 1/2.</text>
</comment>
<comment type="similarity">
    <text evidence="1">Belongs to the DMRL synthase family.</text>
</comment>
<protein>
    <recommendedName>
        <fullName evidence="1">6,7-dimethyl-8-ribityllumazine synthase</fullName>
        <shortName evidence="1">DMRL synthase</shortName>
        <shortName evidence="1">LS</shortName>
        <shortName evidence="1">Lumazine synthase</shortName>
        <ecNumber evidence="1">2.5.1.78</ecNumber>
    </recommendedName>
</protein>
<proteinExistence type="inferred from homology"/>
<name>RISB_CLAM3</name>
<keyword id="KW-0686">Riboflavin biosynthesis</keyword>
<keyword id="KW-0808">Transferase</keyword>
<reference key="1">
    <citation type="journal article" date="2008" name="J. Bacteriol.">
        <title>The genome sequence of the tomato-pathogenic actinomycete Clavibacter michiganensis subsp. michiganensis NCPPB382 reveals a large island involved in pathogenicity.</title>
        <authorList>
            <person name="Gartemann K.-H."/>
            <person name="Abt B."/>
            <person name="Bekel T."/>
            <person name="Burger A."/>
            <person name="Engemann J."/>
            <person name="Fluegel M."/>
            <person name="Gaigalat L."/>
            <person name="Goesmann A."/>
            <person name="Graefen I."/>
            <person name="Kalinowski J."/>
            <person name="Kaup O."/>
            <person name="Kirchner O."/>
            <person name="Krause L."/>
            <person name="Linke B."/>
            <person name="McHardy A."/>
            <person name="Meyer F."/>
            <person name="Pohle S."/>
            <person name="Rueckert C."/>
            <person name="Schneiker S."/>
            <person name="Zellermann E.-M."/>
            <person name="Puehler A."/>
            <person name="Eichenlaub R."/>
            <person name="Kaiser O."/>
            <person name="Bartels D."/>
        </authorList>
    </citation>
    <scope>NUCLEOTIDE SEQUENCE [LARGE SCALE GENOMIC DNA]</scope>
    <source>
        <strain>NCPPB 382</strain>
    </source>
</reference>
<accession>A5CPK0</accession>
<gene>
    <name evidence="1" type="primary">ribH</name>
    <name type="ordered locus">CMM_0960</name>
</gene>
<evidence type="ECO:0000255" key="1">
    <source>
        <dbReference type="HAMAP-Rule" id="MF_00178"/>
    </source>
</evidence>
<feature type="chain" id="PRO_1000040401" description="6,7-dimethyl-8-ribityllumazine synthase">
    <location>
        <begin position="1"/>
        <end position="160"/>
    </location>
</feature>
<feature type="active site" description="Proton donor" evidence="1">
    <location>
        <position position="90"/>
    </location>
</feature>
<feature type="binding site" evidence="1">
    <location>
        <position position="28"/>
    </location>
    <ligand>
        <name>5-amino-6-(D-ribitylamino)uracil</name>
        <dbReference type="ChEBI" id="CHEBI:15934"/>
    </ligand>
</feature>
<feature type="binding site" evidence="1">
    <location>
        <begin position="59"/>
        <end position="61"/>
    </location>
    <ligand>
        <name>5-amino-6-(D-ribitylamino)uracil</name>
        <dbReference type="ChEBI" id="CHEBI:15934"/>
    </ligand>
</feature>
<feature type="binding site" evidence="1">
    <location>
        <begin position="82"/>
        <end position="84"/>
    </location>
    <ligand>
        <name>5-amino-6-(D-ribitylamino)uracil</name>
        <dbReference type="ChEBI" id="CHEBI:15934"/>
    </ligand>
</feature>
<feature type="binding site" evidence="1">
    <location>
        <begin position="87"/>
        <end position="88"/>
    </location>
    <ligand>
        <name>(2S)-2-hydroxy-3-oxobutyl phosphate</name>
        <dbReference type="ChEBI" id="CHEBI:58830"/>
    </ligand>
</feature>
<feature type="binding site" evidence="1">
    <location>
        <position position="115"/>
    </location>
    <ligand>
        <name>5-amino-6-(D-ribitylamino)uracil</name>
        <dbReference type="ChEBI" id="CHEBI:15934"/>
    </ligand>
</feature>
<feature type="binding site" evidence="1">
    <location>
        <position position="129"/>
    </location>
    <ligand>
        <name>(2S)-2-hydroxy-3-oxobutyl phosphate</name>
        <dbReference type="ChEBI" id="CHEBI:58830"/>
    </ligand>
</feature>